<feature type="chain" id="PRO_0000082956" description="Methionyl-tRNA formyltransferase">
    <location>
        <begin position="1"/>
        <end position="318"/>
    </location>
</feature>
<feature type="binding site" evidence="1">
    <location>
        <begin position="115"/>
        <end position="118"/>
    </location>
    <ligand>
        <name>(6S)-5,6,7,8-tetrahydrofolate</name>
        <dbReference type="ChEBI" id="CHEBI:57453"/>
    </ligand>
</feature>
<comment type="function">
    <text evidence="1">Attaches a formyl group to the free amino group of methionyl-tRNA(fMet). The formyl group appears to play a dual role in the initiator identity of N-formylmethionyl-tRNA by promoting its recognition by IF2 and preventing the misappropriation of this tRNA by the elongation apparatus.</text>
</comment>
<comment type="catalytic activity">
    <reaction evidence="1">
        <text>L-methionyl-tRNA(fMet) + (6R)-10-formyltetrahydrofolate = N-formyl-L-methionyl-tRNA(fMet) + (6S)-5,6,7,8-tetrahydrofolate + H(+)</text>
        <dbReference type="Rhea" id="RHEA:24380"/>
        <dbReference type="Rhea" id="RHEA-COMP:9952"/>
        <dbReference type="Rhea" id="RHEA-COMP:9953"/>
        <dbReference type="ChEBI" id="CHEBI:15378"/>
        <dbReference type="ChEBI" id="CHEBI:57453"/>
        <dbReference type="ChEBI" id="CHEBI:78530"/>
        <dbReference type="ChEBI" id="CHEBI:78844"/>
        <dbReference type="ChEBI" id="CHEBI:195366"/>
        <dbReference type="EC" id="2.1.2.9"/>
    </reaction>
</comment>
<comment type="similarity">
    <text evidence="1">Belongs to the Fmt family.</text>
</comment>
<protein>
    <recommendedName>
        <fullName evidence="1">Methionyl-tRNA formyltransferase</fullName>
        <ecNumber evidence="1">2.1.2.9</ecNumber>
    </recommendedName>
</protein>
<name>FMT_DEIRA</name>
<keyword id="KW-0648">Protein biosynthesis</keyword>
<keyword id="KW-1185">Reference proteome</keyword>
<keyword id="KW-0808">Transferase</keyword>
<dbReference type="EC" id="2.1.2.9" evidence="1"/>
<dbReference type="EMBL" id="AE000513">
    <property type="protein sequence ID" value="AAF11976.1"/>
    <property type="molecule type" value="Genomic_DNA"/>
</dbReference>
<dbReference type="PIR" id="A75275">
    <property type="entry name" value="A75275"/>
</dbReference>
<dbReference type="RefSeq" id="NP_296155.1">
    <property type="nucleotide sequence ID" value="NC_001263.1"/>
</dbReference>
<dbReference type="RefSeq" id="WP_010889060.1">
    <property type="nucleotide sequence ID" value="NC_001263.1"/>
</dbReference>
<dbReference type="SMR" id="Q9RRQ3"/>
<dbReference type="FunCoup" id="Q9RRQ3">
    <property type="interactions" value="433"/>
</dbReference>
<dbReference type="STRING" id="243230.DR_2435"/>
<dbReference type="PaxDb" id="243230-DR_2435"/>
<dbReference type="EnsemblBacteria" id="AAF11976">
    <property type="protein sequence ID" value="AAF11976"/>
    <property type="gene ID" value="DR_2435"/>
</dbReference>
<dbReference type="GeneID" id="69518688"/>
<dbReference type="KEGG" id="dra:DR_2435"/>
<dbReference type="PATRIC" id="fig|243230.17.peg.2670"/>
<dbReference type="eggNOG" id="COG0223">
    <property type="taxonomic scope" value="Bacteria"/>
</dbReference>
<dbReference type="HOGENOM" id="CLU_033347_1_1_0"/>
<dbReference type="InParanoid" id="Q9RRQ3"/>
<dbReference type="OrthoDB" id="9802815at2"/>
<dbReference type="Proteomes" id="UP000002524">
    <property type="component" value="Chromosome 1"/>
</dbReference>
<dbReference type="GO" id="GO:0005829">
    <property type="term" value="C:cytosol"/>
    <property type="evidence" value="ECO:0000318"/>
    <property type="project" value="GO_Central"/>
</dbReference>
<dbReference type="GO" id="GO:0004479">
    <property type="term" value="F:methionyl-tRNA formyltransferase activity"/>
    <property type="evidence" value="ECO:0000318"/>
    <property type="project" value="GO_Central"/>
</dbReference>
<dbReference type="GO" id="GO:0071951">
    <property type="term" value="P:conversion of methionyl-tRNA to N-formyl-methionyl-tRNA"/>
    <property type="evidence" value="ECO:0000318"/>
    <property type="project" value="GO_Central"/>
</dbReference>
<dbReference type="CDD" id="cd08646">
    <property type="entry name" value="FMT_core_Met-tRNA-FMT_N"/>
    <property type="match status" value="1"/>
</dbReference>
<dbReference type="CDD" id="cd08704">
    <property type="entry name" value="Met_tRNA_FMT_C"/>
    <property type="match status" value="1"/>
</dbReference>
<dbReference type="FunFam" id="3.40.50.12230:FF:000001">
    <property type="entry name" value="Methionyl-tRNA formyltransferase"/>
    <property type="match status" value="1"/>
</dbReference>
<dbReference type="Gene3D" id="3.40.50.12230">
    <property type="match status" value="1"/>
</dbReference>
<dbReference type="HAMAP" id="MF_00182">
    <property type="entry name" value="Formyl_trans"/>
    <property type="match status" value="1"/>
</dbReference>
<dbReference type="InterPro" id="IPR005794">
    <property type="entry name" value="Fmt"/>
</dbReference>
<dbReference type="InterPro" id="IPR005793">
    <property type="entry name" value="Formyl_trans_C"/>
</dbReference>
<dbReference type="InterPro" id="IPR002376">
    <property type="entry name" value="Formyl_transf_N"/>
</dbReference>
<dbReference type="InterPro" id="IPR036477">
    <property type="entry name" value="Formyl_transf_N_sf"/>
</dbReference>
<dbReference type="InterPro" id="IPR011034">
    <property type="entry name" value="Formyl_transferase-like_C_sf"/>
</dbReference>
<dbReference type="InterPro" id="IPR001555">
    <property type="entry name" value="GART_AS"/>
</dbReference>
<dbReference type="InterPro" id="IPR044135">
    <property type="entry name" value="Met-tRNA-FMT_C"/>
</dbReference>
<dbReference type="InterPro" id="IPR041711">
    <property type="entry name" value="Met-tRNA-FMT_N"/>
</dbReference>
<dbReference type="NCBIfam" id="TIGR00460">
    <property type="entry name" value="fmt"/>
    <property type="match status" value="1"/>
</dbReference>
<dbReference type="PANTHER" id="PTHR11138">
    <property type="entry name" value="METHIONYL-TRNA FORMYLTRANSFERASE"/>
    <property type="match status" value="1"/>
</dbReference>
<dbReference type="PANTHER" id="PTHR11138:SF5">
    <property type="entry name" value="METHIONYL-TRNA FORMYLTRANSFERASE, MITOCHONDRIAL"/>
    <property type="match status" value="1"/>
</dbReference>
<dbReference type="Pfam" id="PF02911">
    <property type="entry name" value="Formyl_trans_C"/>
    <property type="match status" value="1"/>
</dbReference>
<dbReference type="Pfam" id="PF00551">
    <property type="entry name" value="Formyl_trans_N"/>
    <property type="match status" value="1"/>
</dbReference>
<dbReference type="SUPFAM" id="SSF50486">
    <property type="entry name" value="FMT C-terminal domain-like"/>
    <property type="match status" value="1"/>
</dbReference>
<dbReference type="SUPFAM" id="SSF53328">
    <property type="entry name" value="Formyltransferase"/>
    <property type="match status" value="1"/>
</dbReference>
<dbReference type="PROSITE" id="PS00373">
    <property type="entry name" value="GART"/>
    <property type="match status" value="1"/>
</dbReference>
<gene>
    <name evidence="1" type="primary">fmt</name>
    <name type="ordered locus">DR_2435</name>
</gene>
<organism>
    <name type="scientific">Deinococcus radiodurans (strain ATCC 13939 / DSM 20539 / JCM 16871 / CCUG 27074 / LMG 4051 / NBRC 15346 / NCIMB 9279 / VKM B-1422 / R1)</name>
    <dbReference type="NCBI Taxonomy" id="243230"/>
    <lineage>
        <taxon>Bacteria</taxon>
        <taxon>Thermotogati</taxon>
        <taxon>Deinococcota</taxon>
        <taxon>Deinococci</taxon>
        <taxon>Deinococcales</taxon>
        <taxon>Deinococcaceae</taxon>
        <taxon>Deinococcus</taxon>
    </lineage>
</organism>
<accession>Q9RRQ3</accession>
<sequence>MSAAAGPKVAFFASPAFALPVLEALRAEFEVVLVVAQPDKPVGRGLKLTPPPVAARAAELGLPLAQPHKLRGNADFAAQLRDSGADVAVTCAYGKILPAGVLEIPRFGFLNTHTSLLPRYRGAAPIQWALIRGETVTGTTIMQTDEGMDTGPVLLQEELPIRPEWTSVELSAALSEQAAALIVRALRTLETLTPQPQDEAQATHAPLLVKEDGFVRWADPAQAVLDRFRGVAAWPQTTAFFGGKRLKLAGLTLGQGKGQPGKVLQVGAGGLTVACGEGAVCIATVQPEAKKAQPAQVWAQGQNVEQGARFDLWEPPQG</sequence>
<proteinExistence type="inferred from homology"/>
<reference key="1">
    <citation type="journal article" date="1999" name="Science">
        <title>Genome sequence of the radioresistant bacterium Deinococcus radiodurans R1.</title>
        <authorList>
            <person name="White O."/>
            <person name="Eisen J.A."/>
            <person name="Heidelberg J.F."/>
            <person name="Hickey E.K."/>
            <person name="Peterson J.D."/>
            <person name="Dodson R.J."/>
            <person name="Haft D.H."/>
            <person name="Gwinn M.L."/>
            <person name="Nelson W.C."/>
            <person name="Richardson D.L."/>
            <person name="Moffat K.S."/>
            <person name="Qin H."/>
            <person name="Jiang L."/>
            <person name="Pamphile W."/>
            <person name="Crosby M."/>
            <person name="Shen M."/>
            <person name="Vamathevan J.J."/>
            <person name="Lam P."/>
            <person name="McDonald L.A."/>
            <person name="Utterback T.R."/>
            <person name="Zalewski C."/>
            <person name="Makarova K.S."/>
            <person name="Aravind L."/>
            <person name="Daly M.J."/>
            <person name="Minton K.W."/>
            <person name="Fleischmann R.D."/>
            <person name="Ketchum K.A."/>
            <person name="Nelson K.E."/>
            <person name="Salzberg S.L."/>
            <person name="Smith H.O."/>
            <person name="Venter J.C."/>
            <person name="Fraser C.M."/>
        </authorList>
    </citation>
    <scope>NUCLEOTIDE SEQUENCE [LARGE SCALE GENOMIC DNA]</scope>
    <source>
        <strain>ATCC 13939 / DSM 20539 / JCM 16871 / CCUG 27074 / LMG 4051 / NBRC 15346 / NCIMB 9279 / VKM B-1422 / R1</strain>
    </source>
</reference>
<evidence type="ECO:0000255" key="1">
    <source>
        <dbReference type="HAMAP-Rule" id="MF_00182"/>
    </source>
</evidence>